<sequence>MRYGTLGEEINTTEVTDEFETLQTIKRTKQNIVGWYFYSFSSEPFVVSAIATYIPLLLEQFARHNGVTLEDHSVHCTADHDKCVLGLFSNRIYIDTSSFALYTFSVSVFFQTLVVITVSGVVDIWNTVTFKRNVLLLFGIIGALSTILISRIYNTQYYMLAFLCILSNSCYGVVNVVGNSLLPLFVSEYLQHNSSSLDERDNVDILTTLISGRGASIGYSSALVVQIISIFLIKKSKSSENIQVATLFVGIWWLIWQLPMSWLLQDSPISADVTPEDMDNLSIHKPKKWIFKFSNLKHGWSSLFQALKHAKLLKDVVIFLVGWFIVSDSVTTINSTAILFAKTELKMSTLSLIVLSILTMINAILGAFTIPQFISRKFQLPGEKLLIYIILWASFIPFYGILGFVFKNIGLKHKFEMFITAIWYGISLGGLSAVSRSVFSLIIPRGQESTFFSIFNVTDKGSSILGPLLIGLITDYTHDIRYSFFLLFALLILAIPIFHLLDVERGKKEASSLQKIPIAD</sequence>
<evidence type="ECO:0000250" key="1"/>
<evidence type="ECO:0000255" key="2"/>
<evidence type="ECO:0000305" key="3"/>
<reference key="1">
    <citation type="journal article" date="2007" name="Proc. Natl. Acad. Sci. U.S.A.">
        <title>Independent sorting-out of thousands of duplicated gene pairs in two yeast species descended from a whole-genome duplication.</title>
        <authorList>
            <person name="Scannell D.R."/>
            <person name="Frank A.C."/>
            <person name="Conant G.C."/>
            <person name="Byrne K.P."/>
            <person name="Woolfit M."/>
            <person name="Wolfe K.H."/>
        </authorList>
    </citation>
    <scope>NUCLEOTIDE SEQUENCE [LARGE SCALE GENOMIC DNA]</scope>
    <source>
        <strain>ATCC 22028 / DSM 70294 / BCRC 21397 / CBS 2163 / NBRC 10782 / NRRL Y-8283 / UCD 57-17</strain>
    </source>
</reference>
<name>ATG22_VANPO</name>
<protein>
    <recommendedName>
        <fullName>Autophagy-related protein 22</fullName>
    </recommendedName>
</protein>
<dbReference type="EMBL" id="DS480382">
    <property type="protein sequence ID" value="EDO19134.1"/>
    <property type="molecule type" value="Genomic_DNA"/>
</dbReference>
<dbReference type="RefSeq" id="XP_001646992.1">
    <property type="nucleotide sequence ID" value="XM_001646942.1"/>
</dbReference>
<dbReference type="FunCoup" id="A7TFA9">
    <property type="interactions" value="49"/>
</dbReference>
<dbReference type="STRING" id="436907.A7TFA9"/>
<dbReference type="GlyCosmos" id="A7TFA9">
    <property type="glycosylation" value="3 sites, No reported glycans"/>
</dbReference>
<dbReference type="GeneID" id="5547464"/>
<dbReference type="KEGG" id="vpo:Kpol_2000p102"/>
<dbReference type="eggNOG" id="ENOG502QR9I">
    <property type="taxonomic scope" value="Eukaryota"/>
</dbReference>
<dbReference type="HOGENOM" id="CLU_017518_1_0_1"/>
<dbReference type="InParanoid" id="A7TFA9"/>
<dbReference type="OMA" id="QQQWEMY"/>
<dbReference type="OrthoDB" id="42657at2759"/>
<dbReference type="PhylomeDB" id="A7TFA9"/>
<dbReference type="Proteomes" id="UP000000267">
    <property type="component" value="Unassembled WGS sequence"/>
</dbReference>
<dbReference type="GO" id="GO:0000329">
    <property type="term" value="C:fungal-type vacuole membrane"/>
    <property type="evidence" value="ECO:0007669"/>
    <property type="project" value="EnsemblFungi"/>
</dbReference>
<dbReference type="GO" id="GO:0032974">
    <property type="term" value="P:amino acid transmembrane export from vacuole"/>
    <property type="evidence" value="ECO:0007669"/>
    <property type="project" value="EnsemblFungi"/>
</dbReference>
<dbReference type="GO" id="GO:0006914">
    <property type="term" value="P:autophagy"/>
    <property type="evidence" value="ECO:0007669"/>
    <property type="project" value="UniProtKB-KW"/>
</dbReference>
<dbReference type="CDD" id="cd17483">
    <property type="entry name" value="MFS_Atg22_like"/>
    <property type="match status" value="1"/>
</dbReference>
<dbReference type="Gene3D" id="1.20.1250.20">
    <property type="entry name" value="MFS general substrate transporter like domains"/>
    <property type="match status" value="1"/>
</dbReference>
<dbReference type="InterPro" id="IPR044738">
    <property type="entry name" value="Atg22"/>
</dbReference>
<dbReference type="InterPro" id="IPR024671">
    <property type="entry name" value="Atg22-like"/>
</dbReference>
<dbReference type="InterPro" id="IPR050495">
    <property type="entry name" value="ATG22/LtaA_families"/>
</dbReference>
<dbReference type="InterPro" id="IPR036259">
    <property type="entry name" value="MFS_trans_sf"/>
</dbReference>
<dbReference type="PANTHER" id="PTHR23519">
    <property type="entry name" value="AUTOPHAGY-RELATED PROTEIN 22"/>
    <property type="match status" value="1"/>
</dbReference>
<dbReference type="PANTHER" id="PTHR23519:SF1">
    <property type="entry name" value="AUTOPHAGY-RELATED PROTEIN 22"/>
    <property type="match status" value="1"/>
</dbReference>
<dbReference type="Pfam" id="PF11700">
    <property type="entry name" value="ATG22"/>
    <property type="match status" value="1"/>
</dbReference>
<dbReference type="SUPFAM" id="SSF103473">
    <property type="entry name" value="MFS general substrate transporter"/>
    <property type="match status" value="1"/>
</dbReference>
<accession>A7TFA9</accession>
<organism>
    <name type="scientific">Vanderwaltozyma polyspora (strain ATCC 22028 / DSM 70294 / BCRC 21397 / CBS 2163 / NBRC 10782 / NRRL Y-8283 / UCD 57-17)</name>
    <name type="common">Kluyveromyces polysporus</name>
    <dbReference type="NCBI Taxonomy" id="436907"/>
    <lineage>
        <taxon>Eukaryota</taxon>
        <taxon>Fungi</taxon>
        <taxon>Dikarya</taxon>
        <taxon>Ascomycota</taxon>
        <taxon>Saccharomycotina</taxon>
        <taxon>Saccharomycetes</taxon>
        <taxon>Saccharomycetales</taxon>
        <taxon>Saccharomycetaceae</taxon>
        <taxon>Vanderwaltozyma</taxon>
    </lineage>
</organism>
<gene>
    <name type="primary">ATG22</name>
    <name type="ORF">Kpol_2000p102</name>
</gene>
<comment type="function">
    <text evidence="1">Vacuolar effluxer which mediate the efflux of amino acids resulting from autophagic degradation. The release of autophagic amino acids allows the maintenance of protein synthesis and viability during nitrogen starvation (By similarity).</text>
</comment>
<comment type="subcellular location">
    <subcellularLocation>
        <location evidence="1">Vacuole membrane</location>
        <topology evidence="1">Multi-pass membrane protein</topology>
    </subcellularLocation>
    <text evidence="1">Vacuole and punctate structures.</text>
</comment>
<comment type="similarity">
    <text evidence="3">Belongs to the ATG22 family.</text>
</comment>
<keyword id="KW-0029">Amino-acid transport</keyword>
<keyword id="KW-0072">Autophagy</keyword>
<keyword id="KW-0325">Glycoprotein</keyword>
<keyword id="KW-0472">Membrane</keyword>
<keyword id="KW-1185">Reference proteome</keyword>
<keyword id="KW-0812">Transmembrane</keyword>
<keyword id="KW-1133">Transmembrane helix</keyword>
<keyword id="KW-0813">Transport</keyword>
<keyword id="KW-0926">Vacuole</keyword>
<proteinExistence type="inferred from homology"/>
<feature type="chain" id="PRO_0000318035" description="Autophagy-related protein 22">
    <location>
        <begin position="1"/>
        <end position="520"/>
    </location>
</feature>
<feature type="transmembrane region" description="Helical" evidence="2">
    <location>
        <begin position="32"/>
        <end position="52"/>
    </location>
</feature>
<feature type="transmembrane region" description="Helical" evidence="2">
    <location>
        <begin position="104"/>
        <end position="124"/>
    </location>
</feature>
<feature type="transmembrane region" description="Helical" evidence="2">
    <location>
        <begin position="133"/>
        <end position="153"/>
    </location>
</feature>
<feature type="transmembrane region" description="Helical" evidence="2">
    <location>
        <begin position="158"/>
        <end position="178"/>
    </location>
</feature>
<feature type="transmembrane region" description="Helical" evidence="2">
    <location>
        <begin position="214"/>
        <end position="234"/>
    </location>
</feature>
<feature type="transmembrane region" description="Helical" evidence="2">
    <location>
        <begin position="244"/>
        <end position="264"/>
    </location>
</feature>
<feature type="transmembrane region" description="Helical" evidence="2">
    <location>
        <begin position="316"/>
        <end position="336"/>
    </location>
</feature>
<feature type="transmembrane region" description="Helical" evidence="2">
    <location>
        <begin position="350"/>
        <end position="370"/>
    </location>
</feature>
<feature type="transmembrane region" description="Helical" evidence="2">
    <location>
        <begin position="386"/>
        <end position="406"/>
    </location>
</feature>
<feature type="transmembrane region" description="Helical" evidence="2">
    <location>
        <begin position="415"/>
        <end position="435"/>
    </location>
</feature>
<feature type="transmembrane region" description="Helical" evidence="2">
    <location>
        <begin position="454"/>
        <end position="474"/>
    </location>
</feature>
<feature type="transmembrane region" description="Helical" evidence="2">
    <location>
        <begin position="483"/>
        <end position="503"/>
    </location>
</feature>
<feature type="glycosylation site" description="N-linked (GlcNAc...) asparagine" evidence="2">
    <location>
        <position position="11"/>
    </location>
</feature>
<feature type="glycosylation site" description="N-linked (GlcNAc...) asparagine" evidence="2">
    <location>
        <position position="193"/>
    </location>
</feature>
<feature type="glycosylation site" description="N-linked (GlcNAc...) asparagine" evidence="2">
    <location>
        <position position="280"/>
    </location>
</feature>